<keyword id="KW-1185">Reference proteome</keyword>
<keyword id="KW-0687">Ribonucleoprotein</keyword>
<keyword id="KW-0689">Ribosomal protein</keyword>
<keyword id="KW-0694">RNA-binding</keyword>
<keyword id="KW-0699">rRNA-binding</keyword>
<comment type="function">
    <text evidence="1">This protein binds to the 23S rRNA, and is important in its secondary structure. It is located near the subunit interface in the base of the L7/L12 stalk, and near the tRNA binding site of the peptidyltransferase center.</text>
</comment>
<comment type="subunit">
    <text evidence="1">Part of the 50S ribosomal subunit.</text>
</comment>
<comment type="similarity">
    <text evidence="1">Belongs to the universal ribosomal protein uL6 family.</text>
</comment>
<evidence type="ECO:0000255" key="1">
    <source>
        <dbReference type="HAMAP-Rule" id="MF_01365"/>
    </source>
</evidence>
<evidence type="ECO:0000305" key="2"/>
<proteinExistence type="inferred from homology"/>
<reference key="1">
    <citation type="journal article" date="1997" name="J. Bacteriol.">
        <title>Complete genome sequence of Methanobacterium thermoautotrophicum deltaH: functional analysis and comparative genomics.</title>
        <authorList>
            <person name="Smith D.R."/>
            <person name="Doucette-Stamm L.A."/>
            <person name="Deloughery C."/>
            <person name="Lee H.-M."/>
            <person name="Dubois J."/>
            <person name="Aldredge T."/>
            <person name="Bashirzadeh R."/>
            <person name="Blakely D."/>
            <person name="Cook R."/>
            <person name="Gilbert K."/>
            <person name="Harrison D."/>
            <person name="Hoang L."/>
            <person name="Keagle P."/>
            <person name="Lumm W."/>
            <person name="Pothier B."/>
            <person name="Qiu D."/>
            <person name="Spadafora R."/>
            <person name="Vicare R."/>
            <person name="Wang Y."/>
            <person name="Wierzbowski J."/>
            <person name="Gibson R."/>
            <person name="Jiwani N."/>
            <person name="Caruso A."/>
            <person name="Bush D."/>
            <person name="Safer H."/>
            <person name="Patwell D."/>
            <person name="Prabhakar S."/>
            <person name="McDougall S."/>
            <person name="Shimer G."/>
            <person name="Goyal A."/>
            <person name="Pietrovski S."/>
            <person name="Church G.M."/>
            <person name="Daniels C.J."/>
            <person name="Mao J.-I."/>
            <person name="Rice P."/>
            <person name="Noelling J."/>
            <person name="Reeve J.N."/>
        </authorList>
    </citation>
    <scope>NUCLEOTIDE SEQUENCE [LARGE SCALE GENOMIC DNA]</scope>
    <source>
        <strain>ATCC 29096 / DSM 1053 / JCM 10044 / NBRC 100330 / Delta H</strain>
    </source>
</reference>
<name>RL6_METTH</name>
<dbReference type="EMBL" id="AE000666">
    <property type="protein sequence ID" value="AAB84520.1"/>
    <property type="molecule type" value="Genomic_DNA"/>
</dbReference>
<dbReference type="PIR" id="E69120">
    <property type="entry name" value="E69120"/>
</dbReference>
<dbReference type="RefSeq" id="WP_010875661.1">
    <property type="nucleotide sequence ID" value="NC_000916.1"/>
</dbReference>
<dbReference type="SMR" id="O26127"/>
<dbReference type="FunCoup" id="O26127">
    <property type="interactions" value="137"/>
</dbReference>
<dbReference type="STRING" id="187420.MTH_19"/>
<dbReference type="PaxDb" id="187420-MTH_19"/>
<dbReference type="EnsemblBacteria" id="AAB84520">
    <property type="protein sequence ID" value="AAB84520"/>
    <property type="gene ID" value="MTH_19"/>
</dbReference>
<dbReference type="GeneID" id="1469981"/>
<dbReference type="KEGG" id="mth:MTH_19"/>
<dbReference type="PATRIC" id="fig|187420.15.peg.19"/>
<dbReference type="HOGENOM" id="CLU_065464_0_0_2"/>
<dbReference type="InParanoid" id="O26127"/>
<dbReference type="Proteomes" id="UP000005223">
    <property type="component" value="Chromosome"/>
</dbReference>
<dbReference type="GO" id="GO:0022625">
    <property type="term" value="C:cytosolic large ribosomal subunit"/>
    <property type="evidence" value="ECO:0007669"/>
    <property type="project" value="TreeGrafter"/>
</dbReference>
<dbReference type="GO" id="GO:0019843">
    <property type="term" value="F:rRNA binding"/>
    <property type="evidence" value="ECO:0007669"/>
    <property type="project" value="UniProtKB-UniRule"/>
</dbReference>
<dbReference type="GO" id="GO:0003735">
    <property type="term" value="F:structural constituent of ribosome"/>
    <property type="evidence" value="ECO:0007669"/>
    <property type="project" value="InterPro"/>
</dbReference>
<dbReference type="GO" id="GO:0002181">
    <property type="term" value="P:cytoplasmic translation"/>
    <property type="evidence" value="ECO:0007669"/>
    <property type="project" value="TreeGrafter"/>
</dbReference>
<dbReference type="FunFam" id="3.90.930.12:FF:000008">
    <property type="entry name" value="50S ribosomal protein L6"/>
    <property type="match status" value="1"/>
</dbReference>
<dbReference type="Gene3D" id="3.90.930.12">
    <property type="entry name" value="Ribosomal protein L6, alpha-beta domain"/>
    <property type="match status" value="2"/>
</dbReference>
<dbReference type="HAMAP" id="MF_01365_A">
    <property type="entry name" value="Ribosomal_uL6_A"/>
    <property type="match status" value="1"/>
</dbReference>
<dbReference type="InterPro" id="IPR000702">
    <property type="entry name" value="Ribosomal_uL6-like"/>
</dbReference>
<dbReference type="InterPro" id="IPR036789">
    <property type="entry name" value="Ribosomal_uL6-like_a/b-dom_sf"/>
</dbReference>
<dbReference type="InterPro" id="IPR020040">
    <property type="entry name" value="Ribosomal_uL6_a/b-dom"/>
</dbReference>
<dbReference type="InterPro" id="IPR019907">
    <property type="entry name" value="Ribosomal_uL6_arc"/>
</dbReference>
<dbReference type="InterPro" id="IPR002359">
    <property type="entry name" value="Ribosomal_uL6_CS2"/>
</dbReference>
<dbReference type="NCBIfam" id="NF004037">
    <property type="entry name" value="PRK05518.1"/>
    <property type="match status" value="1"/>
</dbReference>
<dbReference type="NCBIfam" id="TIGR03653">
    <property type="entry name" value="uL6_arch"/>
    <property type="match status" value="1"/>
</dbReference>
<dbReference type="PANTHER" id="PTHR11655:SF16">
    <property type="entry name" value="60S RIBOSOMAL PROTEIN L9"/>
    <property type="match status" value="1"/>
</dbReference>
<dbReference type="PANTHER" id="PTHR11655">
    <property type="entry name" value="60S/50S RIBOSOMAL PROTEIN L6/L9"/>
    <property type="match status" value="1"/>
</dbReference>
<dbReference type="Pfam" id="PF00347">
    <property type="entry name" value="Ribosomal_L6"/>
    <property type="match status" value="2"/>
</dbReference>
<dbReference type="PIRSF" id="PIRSF002162">
    <property type="entry name" value="Ribosomal_L6"/>
    <property type="match status" value="1"/>
</dbReference>
<dbReference type="SUPFAM" id="SSF56053">
    <property type="entry name" value="Ribosomal protein L6"/>
    <property type="match status" value="2"/>
</dbReference>
<dbReference type="PROSITE" id="PS00700">
    <property type="entry name" value="RIBOSOMAL_L6_2"/>
    <property type="match status" value="1"/>
</dbReference>
<protein>
    <recommendedName>
        <fullName evidence="1">Large ribosomal subunit protein uL6</fullName>
    </recommendedName>
    <alternativeName>
        <fullName evidence="2">50S ribosomal protein L6</fullName>
    </alternativeName>
</protein>
<organism>
    <name type="scientific">Methanothermobacter thermautotrophicus (strain ATCC 29096 / DSM 1053 / JCM 10044 / NBRC 100330 / Delta H)</name>
    <name type="common">Methanobacterium thermoautotrophicum</name>
    <dbReference type="NCBI Taxonomy" id="187420"/>
    <lineage>
        <taxon>Archaea</taxon>
        <taxon>Methanobacteriati</taxon>
        <taxon>Methanobacteriota</taxon>
        <taxon>Methanomada group</taxon>
        <taxon>Methanobacteria</taxon>
        <taxon>Methanobacteriales</taxon>
        <taxon>Methanobacteriaceae</taxon>
        <taxon>Methanothermobacter</taxon>
    </lineage>
</organism>
<feature type="chain" id="PRO_0000131087" description="Large ribosomal subunit protein uL6">
    <location>
        <begin position="1"/>
        <end position="177"/>
    </location>
</feature>
<gene>
    <name evidence="1" type="primary">rpl6</name>
    <name type="ordered locus">MTH_19</name>
</gene>
<accession>O26127</accession>
<sequence>MVLAALIREEIPIPDGVDVTIDGGVTVKGPKWELSRKFNHSEISMAVEDDKVVLEVKFPKKKDKAMIGTVRAHISNMITGVTEGFRYRMKIVYAHFPMSVKVAGDKVVIENFLGERHPRTARFVGDTKVQVKGDEVEITGINKEHVGQTMANIEQATKIKGRDPRVFQDGIYLVSKE</sequence>